<name>TIR_ECO1A</name>
<organism>
    <name type="scientific">Escherichia coli O111:H- (strain 11128 / EHEC)</name>
    <dbReference type="NCBI Taxonomy" id="585396"/>
    <lineage>
        <taxon>Bacteria</taxon>
        <taxon>Pseudomonadati</taxon>
        <taxon>Pseudomonadota</taxon>
        <taxon>Gammaproteobacteria</taxon>
        <taxon>Enterobacterales</taxon>
        <taxon>Enterobacteriaceae</taxon>
        <taxon>Escherichia</taxon>
    </lineage>
</organism>
<sequence length="551" mass="56975">MPIGNLGNNVNSNNLIPPAPPLPSQTDGASRGGAGQLINSTGALGSRLLFSPLRNSIADSVDSRDIPGLPVHPSRLATATSEICLLGGFEVLHDKGPLDTLNKQIGASAFRIEQQSDGSYAAIGEKNGVEVSVILNSQELQSLQAIDIEDKGRFVFTGGRGGGGHSMVTPASDIAEARAKILAKLDPNNHGGSQARNVDTRSVGVGSASGMDDSVVSETRTSSTASSVRSDPKFWVSIGAIAAGLAGLAATGITQALALTPEPDDPTTTDPEQAASAAESATRDQLTQEAFKNPENQKVSIDEIGNSIPSGELKDDVVAKIEEQAKEAGEAARQQAVESNAQAQQRYDTQYARRQEELELSSGIGYSLSSALIVGGGIGAGVTTALHRRNQPAEQTTTTTTHTVVQQQTGGNTPAQGGTDAIRAEDTSLNRRDSQRSTASTHWSDTSSAVVNPYAEVGEARNSSPARQAEEHIYDEVAADPNYSVIQNFSGNNQVTGRLMGTPGQGIQSTYAILTNNSAGLRLGMGGLTGSGGSAVNTANAAPTPGPGRFV</sequence>
<comment type="function">
    <text evidence="1">Multifunctional protein that is required for efficient pedestal formation in host epithelial cells during infection. The extracellular region acts as a receptor for bacterial intimin, allowing the bacterium to attach tightly to the host-cell surface. Simultaneously, the intracellular region initiates a signaling cascade in the host cell, which leads to actin polymerization and formation of actin pedestals at the sites of bacterial adhesion (By similarity).</text>
</comment>
<comment type="subunit">
    <text evidence="1">Interacts with intimin and host proteins.</text>
</comment>
<comment type="subcellular location">
    <subcellularLocation>
        <location evidence="1">Secreted</location>
    </subcellularLocation>
    <subcellularLocation>
        <location evidence="1">Host cell membrane</location>
        <topology evidence="1">Multi-pass membrane protein</topology>
    </subcellularLocation>
    <text evidence="1">Secreted via the type III secretion system (T3SS). Released into the host cytoplasm via T3SS and then independently inserts into the plasma membrane from a cytoplasmic location. In host cells, localizes to the tip of the actin pedestal (By similarity).</text>
</comment>
<comment type="PTM">
    <text evidence="1">Phosphorylated by host kinases.</text>
</comment>
<comment type="similarity">
    <text evidence="4">Belongs to the Tir receptor family.</text>
</comment>
<feature type="chain" id="PRO_0000414055" description="Translocated intimin receptor Tir">
    <location>
        <begin position="1"/>
        <end position="551"/>
    </location>
</feature>
<feature type="topological domain" description="Cytoplasmic" evidence="2">
    <location>
        <begin position="1"/>
        <end position="233"/>
    </location>
</feature>
<feature type="transmembrane region" description="Helical" evidence="2">
    <location>
        <begin position="234"/>
        <end position="254"/>
    </location>
</feature>
<feature type="topological domain" description="Extracellular" evidence="2">
    <location>
        <begin position="255"/>
        <end position="362"/>
    </location>
</feature>
<feature type="transmembrane region" description="Helical" evidence="2">
    <location>
        <begin position="363"/>
        <end position="383"/>
    </location>
</feature>
<feature type="topological domain" description="Cytoplasmic" evidence="2">
    <location>
        <begin position="384"/>
        <end position="551"/>
    </location>
</feature>
<feature type="region of interest" description="Disordered" evidence="3">
    <location>
        <begin position="1"/>
        <end position="36"/>
    </location>
</feature>
<feature type="region of interest" description="Disordered" evidence="3">
    <location>
        <begin position="186"/>
        <end position="229"/>
    </location>
</feature>
<feature type="region of interest" description="Disordered" evidence="3">
    <location>
        <begin position="259"/>
        <end position="311"/>
    </location>
</feature>
<feature type="region of interest" description="Disordered" evidence="3">
    <location>
        <begin position="389"/>
        <end position="450"/>
    </location>
</feature>
<feature type="short sequence motif" description="Essential for actin pedestal formation" evidence="1">
    <location>
        <begin position="452"/>
        <end position="454"/>
    </location>
</feature>
<feature type="compositionally biased region" description="Low complexity" evidence="3">
    <location>
        <begin position="1"/>
        <end position="15"/>
    </location>
</feature>
<feature type="compositionally biased region" description="Low complexity" evidence="3">
    <location>
        <begin position="212"/>
        <end position="229"/>
    </location>
</feature>
<feature type="compositionally biased region" description="Polar residues" evidence="3">
    <location>
        <begin position="283"/>
        <end position="299"/>
    </location>
</feature>
<feature type="compositionally biased region" description="Low complexity" evidence="3">
    <location>
        <begin position="395"/>
        <end position="409"/>
    </location>
</feature>
<feature type="compositionally biased region" description="Basic and acidic residues" evidence="3">
    <location>
        <begin position="422"/>
        <end position="435"/>
    </location>
</feature>
<feature type="compositionally biased region" description="Polar residues" evidence="3">
    <location>
        <begin position="436"/>
        <end position="450"/>
    </location>
</feature>
<keyword id="KW-1032">Host cell membrane</keyword>
<keyword id="KW-1043">Host membrane</keyword>
<keyword id="KW-0472">Membrane</keyword>
<keyword id="KW-0597">Phosphoprotein</keyword>
<keyword id="KW-0675">Receptor</keyword>
<keyword id="KW-0964">Secreted</keyword>
<keyword id="KW-0812">Transmembrane</keyword>
<keyword id="KW-1133">Transmembrane helix</keyword>
<keyword id="KW-0843">Virulence</keyword>
<evidence type="ECO:0000250" key="1"/>
<evidence type="ECO:0000255" key="2"/>
<evidence type="ECO:0000256" key="3">
    <source>
        <dbReference type="SAM" id="MobiDB-lite"/>
    </source>
</evidence>
<evidence type="ECO:0000305" key="4"/>
<protein>
    <recommendedName>
        <fullName>Translocated intimin receptor Tir</fullName>
    </recommendedName>
    <alternativeName>
        <fullName>Secreted effector protein Tir</fullName>
    </alternativeName>
</protein>
<proteinExistence type="inferred from homology"/>
<gene>
    <name type="primary">tir</name>
    <name type="synonym">espE</name>
    <name type="ordered locus">ECO111_3745</name>
</gene>
<accession>C8UFK8</accession>
<reference key="1">
    <citation type="journal article" date="2009" name="Proc. Natl. Acad. Sci. U.S.A.">
        <title>Comparative genomics reveal the mechanism of the parallel evolution of O157 and non-O157 enterohemorrhagic Escherichia coli.</title>
        <authorList>
            <person name="Ogura Y."/>
            <person name="Ooka T."/>
            <person name="Iguchi A."/>
            <person name="Toh H."/>
            <person name="Asadulghani M."/>
            <person name="Oshima K."/>
            <person name="Kodama T."/>
            <person name="Abe H."/>
            <person name="Nakayama K."/>
            <person name="Kurokawa K."/>
            <person name="Tobe T."/>
            <person name="Hattori M."/>
            <person name="Hayashi T."/>
        </authorList>
    </citation>
    <scope>NUCLEOTIDE SEQUENCE [LARGE SCALE GENOMIC DNA]</scope>
    <source>
        <strain>11128 / EHEC</strain>
    </source>
</reference>
<dbReference type="EMBL" id="AP010960">
    <property type="protein sequence ID" value="BAI37530.1"/>
    <property type="molecule type" value="Genomic_DNA"/>
</dbReference>
<dbReference type="RefSeq" id="WP_001369484.1">
    <property type="nucleotide sequence ID" value="NC_013364.1"/>
</dbReference>
<dbReference type="SMR" id="C8UFK8"/>
<dbReference type="IntAct" id="C8UFK8">
    <property type="interactions" value="1"/>
</dbReference>
<dbReference type="KEGG" id="eoi:ECO111_3745"/>
<dbReference type="HOGENOM" id="CLU_497576_0_0_6"/>
<dbReference type="GO" id="GO:0005576">
    <property type="term" value="C:extracellular region"/>
    <property type="evidence" value="ECO:0007669"/>
    <property type="project" value="UniProtKB-SubCell"/>
</dbReference>
<dbReference type="GO" id="GO:0020002">
    <property type="term" value="C:host cell plasma membrane"/>
    <property type="evidence" value="ECO:0007669"/>
    <property type="project" value="UniProtKB-SubCell"/>
</dbReference>
<dbReference type="GO" id="GO:0016020">
    <property type="term" value="C:membrane"/>
    <property type="evidence" value="ECO:0007669"/>
    <property type="project" value="UniProtKB-KW"/>
</dbReference>
<dbReference type="Gene3D" id="4.10.820.10">
    <property type="entry name" value="Translocated intimin receptor, central domain"/>
    <property type="match status" value="1"/>
</dbReference>
<dbReference type="InterPro" id="IPR037003">
    <property type="entry name" value="Tir_central_sf"/>
</dbReference>
<dbReference type="InterPro" id="IPR022638">
    <property type="entry name" value="Transloc_intimin_rcpt"/>
</dbReference>
<dbReference type="InterPro" id="IPR022639">
    <property type="entry name" value="Transloc_intimin_rcpt_C"/>
</dbReference>
<dbReference type="InterPro" id="IPR003536">
    <property type="entry name" value="Transloc_intimin_rcpt_cen_dom"/>
</dbReference>
<dbReference type="InterPro" id="IPR022633">
    <property type="entry name" value="Transloc_intimin_rcpt_N"/>
</dbReference>
<dbReference type="NCBIfam" id="NF033637">
    <property type="entry name" value="transloc_TIR"/>
    <property type="match status" value="1"/>
</dbReference>
<dbReference type="Pfam" id="PF07489">
    <property type="entry name" value="Tir_receptor_C"/>
    <property type="match status" value="1"/>
</dbReference>
<dbReference type="Pfam" id="PF03549">
    <property type="entry name" value="Tir_receptor_M"/>
    <property type="match status" value="1"/>
</dbReference>
<dbReference type="Pfam" id="PF07490">
    <property type="entry name" value="Tir_receptor_N"/>
    <property type="match status" value="1"/>
</dbReference>
<dbReference type="PRINTS" id="PR01370">
    <property type="entry name" value="TRNSINTIMINR"/>
</dbReference>